<name>LEUC_SYNS3</name>
<dbReference type="EC" id="4.2.1.33" evidence="1"/>
<dbReference type="EMBL" id="CP000435">
    <property type="protein sequence ID" value="ABI47164.1"/>
    <property type="molecule type" value="Genomic_DNA"/>
</dbReference>
<dbReference type="RefSeq" id="WP_011618282.1">
    <property type="nucleotide sequence ID" value="NC_008319.1"/>
</dbReference>
<dbReference type="SMR" id="Q0IDD5"/>
<dbReference type="STRING" id="64471.sync_0303"/>
<dbReference type="KEGG" id="syg:sync_0303"/>
<dbReference type="eggNOG" id="COG0065">
    <property type="taxonomic scope" value="Bacteria"/>
</dbReference>
<dbReference type="HOGENOM" id="CLU_006714_3_4_3"/>
<dbReference type="OrthoDB" id="9802769at2"/>
<dbReference type="UniPathway" id="UPA00048">
    <property type="reaction ID" value="UER00071"/>
</dbReference>
<dbReference type="Proteomes" id="UP000001961">
    <property type="component" value="Chromosome"/>
</dbReference>
<dbReference type="GO" id="GO:0003861">
    <property type="term" value="F:3-isopropylmalate dehydratase activity"/>
    <property type="evidence" value="ECO:0007669"/>
    <property type="project" value="UniProtKB-UniRule"/>
</dbReference>
<dbReference type="GO" id="GO:0051539">
    <property type="term" value="F:4 iron, 4 sulfur cluster binding"/>
    <property type="evidence" value="ECO:0007669"/>
    <property type="project" value="UniProtKB-KW"/>
</dbReference>
<dbReference type="GO" id="GO:0046872">
    <property type="term" value="F:metal ion binding"/>
    <property type="evidence" value="ECO:0007669"/>
    <property type="project" value="UniProtKB-KW"/>
</dbReference>
<dbReference type="GO" id="GO:0009098">
    <property type="term" value="P:L-leucine biosynthetic process"/>
    <property type="evidence" value="ECO:0007669"/>
    <property type="project" value="UniProtKB-UniRule"/>
</dbReference>
<dbReference type="CDD" id="cd01583">
    <property type="entry name" value="IPMI"/>
    <property type="match status" value="1"/>
</dbReference>
<dbReference type="Gene3D" id="3.30.499.10">
    <property type="entry name" value="Aconitase, domain 3"/>
    <property type="match status" value="2"/>
</dbReference>
<dbReference type="HAMAP" id="MF_01026">
    <property type="entry name" value="LeuC_type1"/>
    <property type="match status" value="1"/>
</dbReference>
<dbReference type="InterPro" id="IPR004430">
    <property type="entry name" value="3-IsopropMal_deHydase_lsu"/>
</dbReference>
<dbReference type="InterPro" id="IPR015931">
    <property type="entry name" value="Acnase/IPM_dHydase_lsu_aba_1/3"/>
</dbReference>
<dbReference type="InterPro" id="IPR001030">
    <property type="entry name" value="Acoase/IPM_deHydtase_lsu_aba"/>
</dbReference>
<dbReference type="InterPro" id="IPR018136">
    <property type="entry name" value="Aconitase_4Fe-4S_BS"/>
</dbReference>
<dbReference type="InterPro" id="IPR036008">
    <property type="entry name" value="Aconitase_4Fe-4S_dom"/>
</dbReference>
<dbReference type="InterPro" id="IPR050067">
    <property type="entry name" value="IPM_dehydratase_rel_enz"/>
</dbReference>
<dbReference type="InterPro" id="IPR033941">
    <property type="entry name" value="IPMI_cat"/>
</dbReference>
<dbReference type="NCBIfam" id="TIGR00170">
    <property type="entry name" value="leuC"/>
    <property type="match status" value="1"/>
</dbReference>
<dbReference type="NCBIfam" id="NF004016">
    <property type="entry name" value="PRK05478.1"/>
    <property type="match status" value="1"/>
</dbReference>
<dbReference type="NCBIfam" id="NF009116">
    <property type="entry name" value="PRK12466.1"/>
    <property type="match status" value="1"/>
</dbReference>
<dbReference type="PANTHER" id="PTHR43822:SF9">
    <property type="entry name" value="3-ISOPROPYLMALATE DEHYDRATASE"/>
    <property type="match status" value="1"/>
</dbReference>
<dbReference type="PANTHER" id="PTHR43822">
    <property type="entry name" value="HOMOACONITASE, MITOCHONDRIAL-RELATED"/>
    <property type="match status" value="1"/>
</dbReference>
<dbReference type="Pfam" id="PF00330">
    <property type="entry name" value="Aconitase"/>
    <property type="match status" value="1"/>
</dbReference>
<dbReference type="PRINTS" id="PR00415">
    <property type="entry name" value="ACONITASE"/>
</dbReference>
<dbReference type="SUPFAM" id="SSF53732">
    <property type="entry name" value="Aconitase iron-sulfur domain"/>
    <property type="match status" value="1"/>
</dbReference>
<dbReference type="PROSITE" id="PS00450">
    <property type="entry name" value="ACONITASE_1"/>
    <property type="match status" value="1"/>
</dbReference>
<dbReference type="PROSITE" id="PS01244">
    <property type="entry name" value="ACONITASE_2"/>
    <property type="match status" value="1"/>
</dbReference>
<proteinExistence type="inferred from homology"/>
<sequence>MSSGTLYDKVWDLHRVAELSGGSTQLLIGLHLIHEVTSPQAFVALEDKGLKVRCPERTVATVDHIVPTTNQARPFADPLAEEMLSTLERNCSKHGIVLNGIGSGRQGIVHVIAPELGLTQPGMTVACGDSHTSTHGAFGAIAFGIGTSQVRDVLASQSLAMNKLKVRRLWFDNQLSPGVFAKDLILHVIRSLGVKAGVGHAYEFAGPAIDALSMEERMTLCNMAIEGGARCGYVNPDQTTFDYLKGRPSVPSGGAWNRATRWWRSLASNADAVFDDELRFDAATISPTVTWGITPGQGIGVDEQVPTPEQLDPADRPIAEEAYRYMDLTPGQAIAGVPVDVCFIGSCTNGRLSDLKAAAAVARGRQVAAGIKAFVVPGSEQVARAAEAEGLDQVFRDAGFEWREPGCSMCLAMNPDRLEGRQISASSSNRNFKGRQGSASGRTLLMSPAMVAAAAVTGYVSDVRSLGD</sequence>
<feature type="chain" id="PRO_1000063626" description="3-isopropylmalate dehydratase large subunit">
    <location>
        <begin position="1"/>
        <end position="468"/>
    </location>
</feature>
<feature type="binding site" evidence="1">
    <location>
        <position position="347"/>
    </location>
    <ligand>
        <name>[4Fe-4S] cluster</name>
        <dbReference type="ChEBI" id="CHEBI:49883"/>
    </ligand>
</feature>
<feature type="binding site" evidence="1">
    <location>
        <position position="407"/>
    </location>
    <ligand>
        <name>[4Fe-4S] cluster</name>
        <dbReference type="ChEBI" id="CHEBI:49883"/>
    </ligand>
</feature>
<feature type="binding site" evidence="1">
    <location>
        <position position="410"/>
    </location>
    <ligand>
        <name>[4Fe-4S] cluster</name>
        <dbReference type="ChEBI" id="CHEBI:49883"/>
    </ligand>
</feature>
<reference key="1">
    <citation type="journal article" date="2006" name="Proc. Natl. Acad. Sci. U.S.A.">
        <title>Genome sequence of Synechococcus CC9311: insights into adaptation to a coastal environment.</title>
        <authorList>
            <person name="Palenik B."/>
            <person name="Ren Q."/>
            <person name="Dupont C.L."/>
            <person name="Myers G.S."/>
            <person name="Heidelberg J.F."/>
            <person name="Badger J.H."/>
            <person name="Madupu R."/>
            <person name="Nelson W.C."/>
            <person name="Brinkac L.M."/>
            <person name="Dodson R.J."/>
            <person name="Durkin A.S."/>
            <person name="Daugherty S.C."/>
            <person name="Sullivan S.A."/>
            <person name="Khouri H."/>
            <person name="Mohamoud Y."/>
            <person name="Halpin R."/>
            <person name="Paulsen I.T."/>
        </authorList>
    </citation>
    <scope>NUCLEOTIDE SEQUENCE [LARGE SCALE GENOMIC DNA]</scope>
    <source>
        <strain>CC9311</strain>
    </source>
</reference>
<protein>
    <recommendedName>
        <fullName evidence="1">3-isopropylmalate dehydratase large subunit</fullName>
        <ecNumber evidence="1">4.2.1.33</ecNumber>
    </recommendedName>
    <alternativeName>
        <fullName evidence="1">Alpha-IPM isomerase</fullName>
        <shortName evidence="1">IPMI</shortName>
    </alternativeName>
    <alternativeName>
        <fullName evidence="1">Isopropylmalate isomerase</fullName>
    </alternativeName>
</protein>
<organism>
    <name type="scientific">Synechococcus sp. (strain CC9311)</name>
    <dbReference type="NCBI Taxonomy" id="64471"/>
    <lineage>
        <taxon>Bacteria</taxon>
        <taxon>Bacillati</taxon>
        <taxon>Cyanobacteriota</taxon>
        <taxon>Cyanophyceae</taxon>
        <taxon>Synechococcales</taxon>
        <taxon>Synechococcaceae</taxon>
        <taxon>Synechococcus</taxon>
    </lineage>
</organism>
<gene>
    <name evidence="1" type="primary">leuC</name>
    <name type="ordered locus">sync_0303</name>
</gene>
<evidence type="ECO:0000255" key="1">
    <source>
        <dbReference type="HAMAP-Rule" id="MF_01026"/>
    </source>
</evidence>
<accession>Q0IDD5</accession>
<comment type="function">
    <text evidence="1">Catalyzes the isomerization between 2-isopropylmalate and 3-isopropylmalate, via the formation of 2-isopropylmaleate.</text>
</comment>
<comment type="catalytic activity">
    <reaction evidence="1">
        <text>(2R,3S)-3-isopropylmalate = (2S)-2-isopropylmalate</text>
        <dbReference type="Rhea" id="RHEA:32287"/>
        <dbReference type="ChEBI" id="CHEBI:1178"/>
        <dbReference type="ChEBI" id="CHEBI:35121"/>
        <dbReference type="EC" id="4.2.1.33"/>
    </reaction>
</comment>
<comment type="cofactor">
    <cofactor evidence="1">
        <name>[4Fe-4S] cluster</name>
        <dbReference type="ChEBI" id="CHEBI:49883"/>
    </cofactor>
    <text evidence="1">Binds 1 [4Fe-4S] cluster per subunit.</text>
</comment>
<comment type="pathway">
    <text evidence="1">Amino-acid biosynthesis; L-leucine biosynthesis; L-leucine from 3-methyl-2-oxobutanoate: step 2/4.</text>
</comment>
<comment type="subunit">
    <text evidence="1">Heterodimer of LeuC and LeuD.</text>
</comment>
<comment type="similarity">
    <text evidence="1">Belongs to the aconitase/IPM isomerase family. LeuC type 1 subfamily.</text>
</comment>
<keyword id="KW-0004">4Fe-4S</keyword>
<keyword id="KW-0028">Amino-acid biosynthesis</keyword>
<keyword id="KW-0100">Branched-chain amino acid biosynthesis</keyword>
<keyword id="KW-0408">Iron</keyword>
<keyword id="KW-0411">Iron-sulfur</keyword>
<keyword id="KW-0432">Leucine biosynthesis</keyword>
<keyword id="KW-0456">Lyase</keyword>
<keyword id="KW-0479">Metal-binding</keyword>
<keyword id="KW-1185">Reference proteome</keyword>